<proteinExistence type="inferred from homology"/>
<sequence length="277" mass="31007">MSTLPIRTVFFISDGTGITAETLGHSLLAQFPEARIRQVRAPFIDDLDKAIDCANQIREAARNDGVRPIVFSTLVSPETVEALHKADALFLDLFDRFIGPLETELGQRSTHTVGRFHGIADSLDYKNRIEAINFAMAHDDGVSSDGELAEADVILVGVSRSGKTPTSLYLAMQFGVKAANYPLIPEDFERNKLPGELHNYRGKLFGLTIAPERLSQIRQERRPNSRYASLDNCKYEIDAAQKLMRRENIRWLDSTTKSIEEISATILQSVRLNRPGY</sequence>
<evidence type="ECO:0000255" key="1">
    <source>
        <dbReference type="HAMAP-Rule" id="MF_01062"/>
    </source>
</evidence>
<comment type="function">
    <text evidence="1">Bifunctional serine/threonine kinase and phosphorylase involved in the regulation of the phosphoenolpyruvate synthase (PEPS) by catalyzing its phosphorylation/dephosphorylation.</text>
</comment>
<comment type="catalytic activity">
    <reaction evidence="1">
        <text>[pyruvate, water dikinase] + ADP = [pyruvate, water dikinase]-phosphate + AMP + H(+)</text>
        <dbReference type="Rhea" id="RHEA:46020"/>
        <dbReference type="Rhea" id="RHEA-COMP:11425"/>
        <dbReference type="Rhea" id="RHEA-COMP:11426"/>
        <dbReference type="ChEBI" id="CHEBI:15378"/>
        <dbReference type="ChEBI" id="CHEBI:43176"/>
        <dbReference type="ChEBI" id="CHEBI:68546"/>
        <dbReference type="ChEBI" id="CHEBI:456215"/>
        <dbReference type="ChEBI" id="CHEBI:456216"/>
        <dbReference type="EC" id="2.7.11.33"/>
    </reaction>
</comment>
<comment type="catalytic activity">
    <reaction evidence="1">
        <text>[pyruvate, water dikinase]-phosphate + phosphate + H(+) = [pyruvate, water dikinase] + diphosphate</text>
        <dbReference type="Rhea" id="RHEA:48580"/>
        <dbReference type="Rhea" id="RHEA-COMP:11425"/>
        <dbReference type="Rhea" id="RHEA-COMP:11426"/>
        <dbReference type="ChEBI" id="CHEBI:15378"/>
        <dbReference type="ChEBI" id="CHEBI:33019"/>
        <dbReference type="ChEBI" id="CHEBI:43176"/>
        <dbReference type="ChEBI" id="CHEBI:43474"/>
        <dbReference type="ChEBI" id="CHEBI:68546"/>
        <dbReference type="EC" id="2.7.4.28"/>
    </reaction>
</comment>
<comment type="similarity">
    <text evidence="1">Belongs to the pyruvate, phosphate/water dikinase regulatory protein family. PSRP subfamily.</text>
</comment>
<dbReference type="EC" id="2.7.11.33" evidence="1"/>
<dbReference type="EC" id="2.7.4.28" evidence="1"/>
<dbReference type="EMBL" id="AM406670">
    <property type="protein sequence ID" value="CAL94785.1"/>
    <property type="molecule type" value="Genomic_DNA"/>
</dbReference>
<dbReference type="RefSeq" id="WP_011765899.1">
    <property type="nucleotide sequence ID" value="NC_008702.1"/>
</dbReference>
<dbReference type="SMR" id="A1K7I0"/>
<dbReference type="STRING" id="62928.azo2168"/>
<dbReference type="KEGG" id="aoa:dqs_2301"/>
<dbReference type="KEGG" id="azo:azo2168"/>
<dbReference type="eggNOG" id="COG1806">
    <property type="taxonomic scope" value="Bacteria"/>
</dbReference>
<dbReference type="HOGENOM" id="CLU_046206_1_0_4"/>
<dbReference type="OrthoDB" id="9782201at2"/>
<dbReference type="Proteomes" id="UP000002588">
    <property type="component" value="Chromosome"/>
</dbReference>
<dbReference type="GO" id="GO:0043531">
    <property type="term" value="F:ADP binding"/>
    <property type="evidence" value="ECO:0007669"/>
    <property type="project" value="UniProtKB-UniRule"/>
</dbReference>
<dbReference type="GO" id="GO:0005524">
    <property type="term" value="F:ATP binding"/>
    <property type="evidence" value="ECO:0007669"/>
    <property type="project" value="InterPro"/>
</dbReference>
<dbReference type="GO" id="GO:0016776">
    <property type="term" value="F:phosphotransferase activity, phosphate group as acceptor"/>
    <property type="evidence" value="ECO:0007669"/>
    <property type="project" value="UniProtKB-UniRule"/>
</dbReference>
<dbReference type="GO" id="GO:0004674">
    <property type="term" value="F:protein serine/threonine kinase activity"/>
    <property type="evidence" value="ECO:0007669"/>
    <property type="project" value="UniProtKB-UniRule"/>
</dbReference>
<dbReference type="HAMAP" id="MF_01062">
    <property type="entry name" value="PSRP"/>
    <property type="match status" value="1"/>
</dbReference>
<dbReference type="InterPro" id="IPR005177">
    <property type="entry name" value="Kinase-pyrophosphorylase"/>
</dbReference>
<dbReference type="InterPro" id="IPR026530">
    <property type="entry name" value="PSRP"/>
</dbReference>
<dbReference type="NCBIfam" id="NF003742">
    <property type="entry name" value="PRK05339.1"/>
    <property type="match status" value="1"/>
</dbReference>
<dbReference type="PANTHER" id="PTHR31756">
    <property type="entry name" value="PYRUVATE, PHOSPHATE DIKINASE REGULATORY PROTEIN 1, CHLOROPLASTIC"/>
    <property type="match status" value="1"/>
</dbReference>
<dbReference type="PANTHER" id="PTHR31756:SF3">
    <property type="entry name" value="PYRUVATE, PHOSPHATE DIKINASE REGULATORY PROTEIN 1, CHLOROPLASTIC"/>
    <property type="match status" value="1"/>
</dbReference>
<dbReference type="Pfam" id="PF03618">
    <property type="entry name" value="Kinase-PPPase"/>
    <property type="match status" value="1"/>
</dbReference>
<gene>
    <name type="ordered locus">azo2168</name>
</gene>
<organism>
    <name type="scientific">Azoarcus sp. (strain BH72)</name>
    <dbReference type="NCBI Taxonomy" id="418699"/>
    <lineage>
        <taxon>Bacteria</taxon>
        <taxon>Pseudomonadati</taxon>
        <taxon>Pseudomonadota</taxon>
        <taxon>Betaproteobacteria</taxon>
        <taxon>Rhodocyclales</taxon>
        <taxon>Zoogloeaceae</taxon>
        <taxon>Azoarcus</taxon>
    </lineage>
</organism>
<keyword id="KW-0418">Kinase</keyword>
<keyword id="KW-0547">Nucleotide-binding</keyword>
<keyword id="KW-1185">Reference proteome</keyword>
<keyword id="KW-0723">Serine/threonine-protein kinase</keyword>
<keyword id="KW-0808">Transferase</keyword>
<name>PSRP_AZOSB</name>
<feature type="chain" id="PRO_0000316634" description="Putative phosphoenolpyruvate synthase regulatory protein">
    <location>
        <begin position="1"/>
        <end position="277"/>
    </location>
</feature>
<feature type="binding site" evidence="1">
    <location>
        <begin position="157"/>
        <end position="164"/>
    </location>
    <ligand>
        <name>ADP</name>
        <dbReference type="ChEBI" id="CHEBI:456216"/>
    </ligand>
</feature>
<reference key="1">
    <citation type="journal article" date="2006" name="Nat. Biotechnol.">
        <title>Complete genome of the mutualistic, N2-fixing grass endophyte Azoarcus sp. strain BH72.</title>
        <authorList>
            <person name="Krause A."/>
            <person name="Ramakumar A."/>
            <person name="Bartels D."/>
            <person name="Battistoni F."/>
            <person name="Bekel T."/>
            <person name="Boch J."/>
            <person name="Boehm M."/>
            <person name="Friedrich F."/>
            <person name="Hurek T."/>
            <person name="Krause L."/>
            <person name="Linke B."/>
            <person name="McHardy A.C."/>
            <person name="Sarkar A."/>
            <person name="Schneiker S."/>
            <person name="Syed A.A."/>
            <person name="Thauer R."/>
            <person name="Vorhoelter F.-J."/>
            <person name="Weidner S."/>
            <person name="Puehler A."/>
            <person name="Reinhold-Hurek B."/>
            <person name="Kaiser O."/>
            <person name="Goesmann A."/>
        </authorList>
    </citation>
    <scope>NUCLEOTIDE SEQUENCE [LARGE SCALE GENOMIC DNA]</scope>
    <source>
        <strain>BH72</strain>
    </source>
</reference>
<accession>A1K7I0</accession>
<protein>
    <recommendedName>
        <fullName evidence="1">Putative phosphoenolpyruvate synthase regulatory protein</fullName>
        <shortName evidence="1">PEP synthase regulatory protein</shortName>
        <shortName evidence="1">PSRP</shortName>
        <ecNumber evidence="1">2.7.11.33</ecNumber>
        <ecNumber evidence="1">2.7.4.28</ecNumber>
    </recommendedName>
    <alternativeName>
        <fullName evidence="1">Pyruvate, water dikinase regulatory protein</fullName>
    </alternativeName>
</protein>